<evidence type="ECO:0000255" key="1">
    <source>
        <dbReference type="HAMAP-Rule" id="MF_01279"/>
    </source>
</evidence>
<accession>B0RP90</accession>
<dbReference type="EC" id="3.4.13.9" evidence="1"/>
<dbReference type="EMBL" id="AM920689">
    <property type="protein sequence ID" value="CAP50275.1"/>
    <property type="molecule type" value="Genomic_DNA"/>
</dbReference>
<dbReference type="SMR" id="B0RP90"/>
<dbReference type="MEROPS" id="M24.003"/>
<dbReference type="KEGG" id="xca:xcc-b100_0927"/>
<dbReference type="HOGENOM" id="CLU_050675_0_0_6"/>
<dbReference type="Proteomes" id="UP000001188">
    <property type="component" value="Chromosome"/>
</dbReference>
<dbReference type="GO" id="GO:0005829">
    <property type="term" value="C:cytosol"/>
    <property type="evidence" value="ECO:0007669"/>
    <property type="project" value="TreeGrafter"/>
</dbReference>
<dbReference type="GO" id="GO:0004177">
    <property type="term" value="F:aminopeptidase activity"/>
    <property type="evidence" value="ECO:0007669"/>
    <property type="project" value="TreeGrafter"/>
</dbReference>
<dbReference type="GO" id="GO:0046872">
    <property type="term" value="F:metal ion binding"/>
    <property type="evidence" value="ECO:0007669"/>
    <property type="project" value="UniProtKB-KW"/>
</dbReference>
<dbReference type="GO" id="GO:0008235">
    <property type="term" value="F:metalloexopeptidase activity"/>
    <property type="evidence" value="ECO:0007669"/>
    <property type="project" value="UniProtKB-UniRule"/>
</dbReference>
<dbReference type="GO" id="GO:0016795">
    <property type="term" value="F:phosphoric triester hydrolase activity"/>
    <property type="evidence" value="ECO:0007669"/>
    <property type="project" value="InterPro"/>
</dbReference>
<dbReference type="GO" id="GO:0102009">
    <property type="term" value="F:proline dipeptidase activity"/>
    <property type="evidence" value="ECO:0007669"/>
    <property type="project" value="UniProtKB-EC"/>
</dbReference>
<dbReference type="GO" id="GO:0006508">
    <property type="term" value="P:proteolysis"/>
    <property type="evidence" value="ECO:0007669"/>
    <property type="project" value="UniProtKB-KW"/>
</dbReference>
<dbReference type="CDD" id="cd01087">
    <property type="entry name" value="Prolidase"/>
    <property type="match status" value="1"/>
</dbReference>
<dbReference type="Gene3D" id="3.90.230.10">
    <property type="entry name" value="Creatinase/methionine aminopeptidase superfamily"/>
    <property type="match status" value="1"/>
</dbReference>
<dbReference type="Gene3D" id="3.40.350.10">
    <property type="entry name" value="Creatinase/prolidase N-terminal domain"/>
    <property type="match status" value="1"/>
</dbReference>
<dbReference type="HAMAP" id="MF_01279">
    <property type="entry name" value="X_Pro_dipeptid"/>
    <property type="match status" value="1"/>
</dbReference>
<dbReference type="InterPro" id="IPR029149">
    <property type="entry name" value="Creatin/AminoP/Spt16_N"/>
</dbReference>
<dbReference type="InterPro" id="IPR036005">
    <property type="entry name" value="Creatinase/aminopeptidase-like"/>
</dbReference>
<dbReference type="InterPro" id="IPR048819">
    <property type="entry name" value="PepQ_N"/>
</dbReference>
<dbReference type="InterPro" id="IPR000994">
    <property type="entry name" value="Pept_M24"/>
</dbReference>
<dbReference type="InterPro" id="IPR001131">
    <property type="entry name" value="Peptidase_M24B_aminopep-P_CS"/>
</dbReference>
<dbReference type="InterPro" id="IPR052433">
    <property type="entry name" value="X-Pro_dipept-like"/>
</dbReference>
<dbReference type="InterPro" id="IPR022846">
    <property type="entry name" value="X_Pro_dipept"/>
</dbReference>
<dbReference type="NCBIfam" id="NF010133">
    <property type="entry name" value="PRK13607.1"/>
    <property type="match status" value="1"/>
</dbReference>
<dbReference type="PANTHER" id="PTHR43226">
    <property type="entry name" value="XAA-PRO AMINOPEPTIDASE 3"/>
    <property type="match status" value="1"/>
</dbReference>
<dbReference type="PANTHER" id="PTHR43226:SF8">
    <property type="entry name" value="XAA-PRO DIPEPTIDASE"/>
    <property type="match status" value="1"/>
</dbReference>
<dbReference type="Pfam" id="PF21216">
    <property type="entry name" value="PepQ_N"/>
    <property type="match status" value="1"/>
</dbReference>
<dbReference type="Pfam" id="PF00557">
    <property type="entry name" value="Peptidase_M24"/>
    <property type="match status" value="1"/>
</dbReference>
<dbReference type="SUPFAM" id="SSF55920">
    <property type="entry name" value="Creatinase/aminopeptidase"/>
    <property type="match status" value="1"/>
</dbReference>
<dbReference type="PROSITE" id="PS00491">
    <property type="entry name" value="PROLINE_PEPTIDASE"/>
    <property type="match status" value="1"/>
</dbReference>
<feature type="chain" id="PRO_1000140336" description="Xaa-Pro dipeptidase">
    <location>
        <begin position="1"/>
        <end position="441"/>
    </location>
</feature>
<feature type="binding site" evidence="1">
    <location>
        <position position="244"/>
    </location>
    <ligand>
        <name>Mn(2+)</name>
        <dbReference type="ChEBI" id="CHEBI:29035"/>
        <label>2</label>
    </ligand>
</feature>
<feature type="binding site" evidence="1">
    <location>
        <position position="255"/>
    </location>
    <ligand>
        <name>Mn(2+)</name>
        <dbReference type="ChEBI" id="CHEBI:29035"/>
        <label>1</label>
    </ligand>
</feature>
<feature type="binding site" evidence="1">
    <location>
        <position position="255"/>
    </location>
    <ligand>
        <name>Mn(2+)</name>
        <dbReference type="ChEBI" id="CHEBI:29035"/>
        <label>2</label>
    </ligand>
</feature>
<feature type="binding site" evidence="1">
    <location>
        <position position="336"/>
    </location>
    <ligand>
        <name>Mn(2+)</name>
        <dbReference type="ChEBI" id="CHEBI:29035"/>
        <label>1</label>
    </ligand>
</feature>
<feature type="binding site" evidence="1">
    <location>
        <position position="381"/>
    </location>
    <ligand>
        <name>Mn(2+)</name>
        <dbReference type="ChEBI" id="CHEBI:29035"/>
        <label>1</label>
    </ligand>
</feature>
<feature type="binding site" evidence="1">
    <location>
        <position position="420"/>
    </location>
    <ligand>
        <name>Mn(2+)</name>
        <dbReference type="ChEBI" id="CHEBI:29035"/>
        <label>1</label>
    </ligand>
</feature>
<feature type="binding site" evidence="1">
    <location>
        <position position="420"/>
    </location>
    <ligand>
        <name>Mn(2+)</name>
        <dbReference type="ChEBI" id="CHEBI:29035"/>
        <label>2</label>
    </ligand>
</feature>
<name>PEPQ_XANCB</name>
<gene>
    <name evidence="1" type="primary">pepQ</name>
    <name type="ordered locus">xcc-b100_0927</name>
</gene>
<protein>
    <recommendedName>
        <fullName evidence="1">Xaa-Pro dipeptidase</fullName>
        <shortName evidence="1">X-Pro dipeptidase</shortName>
        <ecNumber evidence="1">3.4.13.9</ecNumber>
    </recommendedName>
    <alternativeName>
        <fullName evidence="1">Imidodipeptidase</fullName>
    </alternativeName>
    <alternativeName>
        <fullName evidence="1">Proline dipeptidase</fullName>
        <shortName evidence="1">Prolidase</shortName>
    </alternativeName>
</protein>
<comment type="function">
    <text evidence="1">Splits dipeptides with a prolyl residue in the C-terminal position.</text>
</comment>
<comment type="catalytic activity">
    <reaction evidence="1">
        <text>Xaa-L-Pro dipeptide + H2O = an L-alpha-amino acid + L-proline</text>
        <dbReference type="Rhea" id="RHEA:76407"/>
        <dbReference type="ChEBI" id="CHEBI:15377"/>
        <dbReference type="ChEBI" id="CHEBI:59869"/>
        <dbReference type="ChEBI" id="CHEBI:60039"/>
        <dbReference type="ChEBI" id="CHEBI:195196"/>
        <dbReference type="EC" id="3.4.13.9"/>
    </reaction>
</comment>
<comment type="cofactor">
    <cofactor evidence="1">
        <name>Mn(2+)</name>
        <dbReference type="ChEBI" id="CHEBI:29035"/>
    </cofactor>
    <text evidence="1">Binds 2 manganese ions per subunit.</text>
</comment>
<comment type="similarity">
    <text evidence="1">Belongs to the peptidase M24B family. Bacterial-type prolidase subfamily.</text>
</comment>
<reference key="1">
    <citation type="journal article" date="2008" name="J. Biotechnol.">
        <title>The genome of Xanthomonas campestris pv. campestris B100 and its use for the reconstruction of metabolic pathways involved in xanthan biosynthesis.</title>
        <authorList>
            <person name="Vorhoelter F.-J."/>
            <person name="Schneiker S."/>
            <person name="Goesmann A."/>
            <person name="Krause L."/>
            <person name="Bekel T."/>
            <person name="Kaiser O."/>
            <person name="Linke B."/>
            <person name="Patschkowski T."/>
            <person name="Rueckert C."/>
            <person name="Schmid J."/>
            <person name="Sidhu V.K."/>
            <person name="Sieber V."/>
            <person name="Tauch A."/>
            <person name="Watt S.A."/>
            <person name="Weisshaar B."/>
            <person name="Becker A."/>
            <person name="Niehaus K."/>
            <person name="Puehler A."/>
        </authorList>
    </citation>
    <scope>NUCLEOTIDE SEQUENCE [LARGE SCALE GENOMIC DNA]</scope>
    <source>
        <strain>B100</strain>
    </source>
</reference>
<sequence length="441" mass="48207">MTQPSLSVLYSDHLRTLTARADQALQRGGFDHLVIPSGTTHYQLFDDRDYPFAVNPQFKAWVPLTRMPHSWLVYTPGKRPTVIFYQPFDYWHVVPDAPSGWWVEHCDIHIIRTPEAALPLLPARTERCAILGEAASALGACVPNNPAAVLDFLDYQRAFKTPYELAVMRLAQQLAVRGHRAAEAAFRAGQSEFGIHMAYCSAVGQDANELPYGNIIALNEHGAVLHYTELGRQAPQPLRSFLIDAGASAHGYASDITRTYAADAGSEFQALIDAVDAAQLRMGNAVRAGVDYKQLHVDAHLSLMGILHDFGIITVSPEAALATGVSAAFFPHGLGHLIGLQVHDVAGFAASDRGGRIERPDGHPYLRLTRMLEPGMVVTIEPGVYFIDMLLDEVKKNGHAASVNWDRVAQFAPYGGIRIEDEVVCTDGAPENLTRPVFAAP</sequence>
<keyword id="KW-0224">Dipeptidase</keyword>
<keyword id="KW-0378">Hydrolase</keyword>
<keyword id="KW-0464">Manganese</keyword>
<keyword id="KW-0479">Metal-binding</keyword>
<keyword id="KW-0482">Metalloprotease</keyword>
<keyword id="KW-0645">Protease</keyword>
<organism>
    <name type="scientific">Xanthomonas campestris pv. campestris (strain B100)</name>
    <dbReference type="NCBI Taxonomy" id="509169"/>
    <lineage>
        <taxon>Bacteria</taxon>
        <taxon>Pseudomonadati</taxon>
        <taxon>Pseudomonadota</taxon>
        <taxon>Gammaproteobacteria</taxon>
        <taxon>Lysobacterales</taxon>
        <taxon>Lysobacteraceae</taxon>
        <taxon>Xanthomonas</taxon>
    </lineage>
</organism>
<proteinExistence type="inferred from homology"/>